<keyword id="KW-0325">Glycoprotein</keyword>
<keyword id="KW-0328">Glycosyltransferase</keyword>
<keyword id="KW-0333">Golgi apparatus</keyword>
<keyword id="KW-0464">Manganese</keyword>
<keyword id="KW-0472">Membrane</keyword>
<keyword id="KW-0479">Metal-binding</keyword>
<keyword id="KW-0735">Signal-anchor</keyword>
<keyword id="KW-0808">Transferase</keyword>
<keyword id="KW-0812">Transmembrane</keyword>
<keyword id="KW-1133">Transmembrane helix</keyword>
<gene>
    <name type="primary">GGTA1</name>
</gene>
<organism>
    <name type="scientific">Lemur catta</name>
    <name type="common">Ring-tailed lemur</name>
    <dbReference type="NCBI Taxonomy" id="9447"/>
    <lineage>
        <taxon>Eukaryota</taxon>
        <taxon>Metazoa</taxon>
        <taxon>Chordata</taxon>
        <taxon>Craniata</taxon>
        <taxon>Vertebrata</taxon>
        <taxon>Euteleostomi</taxon>
        <taxon>Mammalia</taxon>
        <taxon>Eutheria</taxon>
        <taxon>Euarchontoglires</taxon>
        <taxon>Primates</taxon>
        <taxon>Strepsirrhini</taxon>
        <taxon>Lemuriformes</taxon>
        <taxon>Lemuridae</taxon>
        <taxon>Lemur</taxon>
    </lineage>
</organism>
<reference key="1">
    <citation type="journal article" date="2007" name="Proc. Natl. Acad. Sci. U.S.A.">
        <title>Functionally important glycosyltransferase gain and loss during catarrhine primate emergence.</title>
        <authorList>
            <person name="Koike C."/>
            <person name="Uddin M."/>
            <person name="Wildman D.E."/>
            <person name="Gray E.A."/>
            <person name="Trucco M."/>
            <person name="Starzl T.E."/>
            <person name="Goodman M."/>
        </authorList>
    </citation>
    <scope>NUCLEOTIDE SEQUENCE [MRNA]</scope>
</reference>
<proteinExistence type="evidence at transcript level"/>
<accession>Q8HYB2</accession>
<evidence type="ECO:0000250" key="1"/>
<evidence type="ECO:0000250" key="2">
    <source>
        <dbReference type="UniProtKB" id="P14769"/>
    </source>
</evidence>
<evidence type="ECO:0000255" key="3"/>
<evidence type="ECO:0000256" key="4">
    <source>
        <dbReference type="SAM" id="MobiDB-lite"/>
    </source>
</evidence>
<evidence type="ECO:0000305" key="5"/>
<comment type="function">
    <text evidence="1">Synthesizes the galactose-alpha(1,3)-galactose group by catalyzing the transfer of a galactose residue, with an alpha-1,3 linkage, on terminal lactosaminide (Gal-beta-1,4-GlcNAc-R) disaccharide borne by a glycoprotein or a glycolipid. Preferentially glycosylates proteins, can synthesize galactose-alpha(1,3)-galactose on glycoproteins but cannot synthesize the glycolipid called isogloboside 3 (iGb3) (By similarity).</text>
</comment>
<comment type="catalytic activity">
    <reaction evidence="2">
        <text>a beta-D-galactosyl-(1-&gt;4)-N-acetyl-beta-D-glucosaminyl derivative + UDP-alpha-D-galactose = an alpha-D-galactosyl-(1-&gt;3)-beta-D-galactosyl-(1-&gt;4)-N-acetyl-beta-D-glucosaminyl derivative + UDP + H(+)</text>
        <dbReference type="Rhea" id="RHEA:13013"/>
        <dbReference type="ChEBI" id="CHEBI:15378"/>
        <dbReference type="ChEBI" id="CHEBI:58223"/>
        <dbReference type="ChEBI" id="CHEBI:66914"/>
        <dbReference type="ChEBI" id="CHEBI:133507"/>
        <dbReference type="ChEBI" id="CHEBI:138024"/>
        <dbReference type="EC" id="2.4.1.87"/>
    </reaction>
</comment>
<comment type="cofactor">
    <cofactor evidence="2">
        <name>Mn(2+)</name>
        <dbReference type="ChEBI" id="CHEBI:29035"/>
    </cofactor>
    <text evidence="2">Binds 1 Mn(2+) ion per subunit.</text>
</comment>
<comment type="pathway">
    <text evidence="2">Protein modification; protein glycosylation.</text>
</comment>
<comment type="subcellular location">
    <subcellularLocation>
        <location evidence="1">Golgi apparatus</location>
        <location evidence="1">Golgi stack membrane</location>
        <topology evidence="1">Single-pass type II membrane protein</topology>
    </subcellularLocation>
    <text evidence="1">Membrane-bound form in trans cisternae of Golgi.</text>
</comment>
<comment type="domain">
    <text evidence="1">The conserved DXD motif is involved in cofactor binding. The manganese ion interacts with the beta-phosphate group of UDP and may also have a role in catalysis (By similarity).</text>
</comment>
<comment type="similarity">
    <text evidence="5">Belongs to the glycosyltransferase 6 family.</text>
</comment>
<protein>
    <recommendedName>
        <fullName>N-acetyllactosaminide alpha-1,3-galactosyltransferase</fullName>
        <ecNumber evidence="2">2.4.1.87</ecNumber>
    </recommendedName>
    <alternativeName>
        <fullName>UDP-galactose:beta-D-galactosyl-1,4-N-acetyl-D-glucosaminide alpha-1,3-galactosyltransferase</fullName>
        <shortName>Galactosyltransferase</shortName>
    </alternativeName>
</protein>
<feature type="chain" id="PRO_0000333702" description="N-acetyllactosaminide alpha-1,3-galactosyltransferase">
    <location>
        <begin position="1"/>
        <end position="375"/>
    </location>
</feature>
<feature type="topological domain" description="Cytoplasmic" evidence="3">
    <location>
        <begin position="1"/>
        <end position="6"/>
    </location>
</feature>
<feature type="transmembrane region" description="Helical; Signal-anchor for type II membrane protein" evidence="3">
    <location>
        <begin position="7"/>
        <end position="25"/>
    </location>
</feature>
<feature type="topological domain" description="Lumenal" evidence="3">
    <location>
        <begin position="26"/>
        <end position="375"/>
    </location>
</feature>
<feature type="region of interest" description="Disordered" evidence="4">
    <location>
        <begin position="57"/>
        <end position="83"/>
    </location>
</feature>
<feature type="compositionally biased region" description="Basic and acidic residues" evidence="4">
    <location>
        <begin position="72"/>
        <end position="83"/>
    </location>
</feature>
<feature type="active site" description="Nucleophile" evidence="2">
    <location>
        <position position="324"/>
    </location>
</feature>
<feature type="binding site" evidence="2">
    <location>
        <begin position="141"/>
        <end position="146"/>
    </location>
    <ligand>
        <name>substrate</name>
    </ligand>
</feature>
<feature type="binding site" evidence="2">
    <location>
        <begin position="232"/>
        <end position="234"/>
    </location>
    <ligand>
        <name>substrate</name>
    </ligand>
</feature>
<feature type="binding site" evidence="2">
    <location>
        <position position="232"/>
    </location>
    <ligand>
        <name>Mn(2+)</name>
        <dbReference type="ChEBI" id="CHEBI:29035"/>
    </ligand>
</feature>
<feature type="binding site" evidence="2">
    <location>
        <position position="234"/>
    </location>
    <ligand>
        <name>Mn(2+)</name>
        <dbReference type="ChEBI" id="CHEBI:29035"/>
    </ligand>
</feature>
<feature type="binding site" evidence="2">
    <location>
        <begin position="254"/>
        <end position="257"/>
    </location>
    <ligand>
        <name>substrate</name>
    </ligand>
</feature>
<feature type="binding site" evidence="2">
    <location>
        <position position="266"/>
    </location>
    <ligand>
        <name>substrate</name>
    </ligand>
</feature>
<feature type="binding site" evidence="2">
    <location>
        <begin position="366"/>
        <end position="372"/>
    </location>
    <ligand>
        <name>substrate</name>
    </ligand>
</feature>
<feature type="glycosylation site" description="N-linked (GlcNAc...) asparagine" evidence="3">
    <location>
        <position position="300"/>
    </location>
</feature>
<dbReference type="EC" id="2.4.1.87" evidence="2"/>
<dbReference type="EMBL" id="AY126667">
    <property type="protein sequence ID" value="AAM95595.2"/>
    <property type="molecule type" value="mRNA"/>
</dbReference>
<dbReference type="SMR" id="Q8HYB2"/>
<dbReference type="CAZy" id="GT6">
    <property type="family name" value="Glycosyltransferase Family 6"/>
</dbReference>
<dbReference type="GlyCosmos" id="Q8HYB2">
    <property type="glycosylation" value="1 site, No reported glycans"/>
</dbReference>
<dbReference type="BRENDA" id="2.4.1.87">
    <property type="organism ID" value="9186"/>
</dbReference>
<dbReference type="UniPathway" id="UPA00378"/>
<dbReference type="GO" id="GO:0031985">
    <property type="term" value="C:Golgi cisterna"/>
    <property type="evidence" value="ECO:0000250"/>
    <property type="project" value="UniProtKB"/>
</dbReference>
<dbReference type="GO" id="GO:0032580">
    <property type="term" value="C:Golgi cisterna membrane"/>
    <property type="evidence" value="ECO:0007669"/>
    <property type="project" value="UniProtKB-SubCell"/>
</dbReference>
<dbReference type="GO" id="GO:0031982">
    <property type="term" value="C:vesicle"/>
    <property type="evidence" value="ECO:0007669"/>
    <property type="project" value="TreeGrafter"/>
</dbReference>
<dbReference type="GO" id="GO:0046872">
    <property type="term" value="F:metal ion binding"/>
    <property type="evidence" value="ECO:0007669"/>
    <property type="project" value="UniProtKB-KW"/>
</dbReference>
<dbReference type="GO" id="GO:0047276">
    <property type="term" value="F:N-acetyllactosaminide 3-alpha-galactosyltransferase activity"/>
    <property type="evidence" value="ECO:0007669"/>
    <property type="project" value="UniProtKB-EC"/>
</dbReference>
<dbReference type="GO" id="GO:0005975">
    <property type="term" value="P:carbohydrate metabolic process"/>
    <property type="evidence" value="ECO:0007669"/>
    <property type="project" value="InterPro"/>
</dbReference>
<dbReference type="GO" id="GO:0030259">
    <property type="term" value="P:lipid glycosylation"/>
    <property type="evidence" value="ECO:0007669"/>
    <property type="project" value="TreeGrafter"/>
</dbReference>
<dbReference type="GO" id="GO:0006486">
    <property type="term" value="P:protein glycosylation"/>
    <property type="evidence" value="ECO:0007669"/>
    <property type="project" value="UniProtKB-UniPathway"/>
</dbReference>
<dbReference type="CDD" id="cd02515">
    <property type="entry name" value="Glyco_transf_6"/>
    <property type="match status" value="1"/>
</dbReference>
<dbReference type="FunFam" id="3.90.550.10:FF:000022">
    <property type="entry name" value="Histo-blood group ABO system transferase"/>
    <property type="match status" value="1"/>
</dbReference>
<dbReference type="Gene3D" id="3.90.550.10">
    <property type="entry name" value="Spore Coat Polysaccharide Biosynthesis Protein SpsA, Chain A"/>
    <property type="match status" value="1"/>
</dbReference>
<dbReference type="InterPro" id="IPR005076">
    <property type="entry name" value="Glyco_trans_6"/>
</dbReference>
<dbReference type="InterPro" id="IPR029044">
    <property type="entry name" value="Nucleotide-diphossugar_trans"/>
</dbReference>
<dbReference type="PANTHER" id="PTHR10462">
    <property type="entry name" value="GLYCOSYLTRANSFERASE-RELATED"/>
    <property type="match status" value="1"/>
</dbReference>
<dbReference type="PANTHER" id="PTHR10462:SF26">
    <property type="entry name" value="N-ACETYLLACTOSAMINIDE ALPHA-1,3-GALACTOSYLTRANSFERASE"/>
    <property type="match status" value="1"/>
</dbReference>
<dbReference type="Pfam" id="PF03414">
    <property type="entry name" value="Glyco_transf_6"/>
    <property type="match status" value="1"/>
</dbReference>
<dbReference type="SUPFAM" id="SSF53448">
    <property type="entry name" value="Nucleotide-diphospho-sugar transferases"/>
    <property type="match status" value="1"/>
</dbReference>
<name>GGTA1_LEMCA</name>
<sequence>MNVKGKVILSMLVVSTVMVVFWEYINSPEGSFLWIYHSKNPEVGDSSTQKGWWFPSWFHDGTPSNQEEEDIDKEKRREKEQRKEDDEEELQLWDWFNPKKRPEVVTVTSWKAPVVWEGTYNKAILENYYAKQKITVGLTVFAVGRYIEHYLEEFITSANRYFMVGHKVIFYIMLDDISKMPLIELGPLRSFKVFEIKPEKRWQDISMMRMKTIGEHILAHIQHEVDFLFCMDVDQVFQDNFGVETLGQSVAQLQAWWYKADPDEFTYERRKESAAYIPFGEGDFYYHAAIFGGTPIQVLNITRECFKGILQDKKNDIEAEWHDESHLNKYFLLNKPSKILSPEYCWDFHIGLPSDIKIVKISWQTKHYNLVRNNV</sequence>